<comment type="function">
    <text evidence="3">Inhibits human voltage-gated potassium (Kv) channels Kv1.2/KCNA2 and Kv1.3/KCNA3. Does not block human Kv1.1/KCNA1 at 100nM concentration.</text>
</comment>
<comment type="subcellular location">
    <subcellularLocation>
        <location evidence="3">Secreted</location>
    </subcellularLocation>
</comment>
<comment type="tissue specificity">
    <text evidence="6">Expressed by the venom gland.</text>
</comment>
<comment type="domain">
    <text evidence="2">Has the structural arrangement of an alpha-helix connected to a beta-sheet by disulfide bonds (CSalpha/beta).</text>
</comment>
<comment type="mass spectrometry"/>
<comment type="similarity">
    <text evidence="5">Belongs to the short scorpion toxin superfamily. Potassium channel inhibitor family. Alpha-KTx 02 subfamily.</text>
</comment>
<name>KAX2L_CENBO</name>
<protein>
    <recommendedName>
        <fullName evidence="4">Potassium channel toxin alpha-KTx 2.21</fullName>
    </recommendedName>
    <alternativeName>
        <fullName evidence="4">CboK6</fullName>
    </alternativeName>
</protein>
<keyword id="KW-0903">Direct protein sequencing</keyword>
<keyword id="KW-1015">Disulfide bond</keyword>
<keyword id="KW-0872">Ion channel impairing toxin</keyword>
<keyword id="KW-0528">Neurotoxin</keyword>
<keyword id="KW-0632">Potassium channel impairing toxin</keyword>
<keyword id="KW-0964">Secreted</keyword>
<keyword id="KW-0800">Toxin</keyword>
<keyword id="KW-1220">Voltage-gated potassium channel impairing toxin</keyword>
<sequence>TTINVKCSLPQQCLRPCKDRFGQHAGGKCINGKCKCYP</sequence>
<feature type="chain" id="PRO_0000459536" description="Potassium channel toxin alpha-KTx 2.21">
    <location>
        <begin position="1"/>
        <end position="38"/>
    </location>
</feature>
<feature type="site" description="Basic residue of the functional dyad" evidence="1">
    <location>
        <position position="28"/>
    </location>
</feature>
<feature type="site" description="Aromatic residue of the functional dyad" evidence="1">
    <location>
        <position position="37"/>
    </location>
</feature>
<feature type="disulfide bond" evidence="1">
    <location>
        <begin position="7"/>
        <end position="29"/>
    </location>
</feature>
<feature type="disulfide bond" evidence="1">
    <location>
        <begin position="13"/>
        <end position="34"/>
    </location>
</feature>
<feature type="disulfide bond" evidence="1">
    <location>
        <begin position="17"/>
        <end position="36"/>
    </location>
</feature>
<feature type="non-terminal residue" evidence="4">
    <location>
        <position position="38"/>
    </location>
</feature>
<reference evidence="5" key="1">
    <citation type="journal article" date="2023" name="Toxins">
        <title>Of Seven New K+ Channel Inhibitor Peptides of Centruroides bonito, alpha-KTx 2.24 Has a Picomolar Affinity for Kv1.2.</title>
        <authorList>
            <person name="Shakeel K."/>
            <person name="Olamendi-Portugal T."/>
            <person name="Naseem M.U."/>
            <person name="Becerril B."/>
            <person name="Zamudio F.Z."/>
            <person name="Delgado-Prudencio G."/>
            <person name="Possani L.D."/>
            <person name="Panyi G."/>
        </authorList>
    </citation>
    <scope>PROTEIN SEQUENCE</scope>
    <scope>FUNCTION</scope>
    <scope>SUBCELLULAR LOCATION</scope>
    <scope>TISSUE SPECIFICITY</scope>
    <scope>MASS SPECTROMETRY</scope>
</reference>
<organism>
    <name type="scientific">Centruroides bonito</name>
    <name type="common">Scorpion</name>
    <dbReference type="NCBI Taxonomy" id="3035065"/>
    <lineage>
        <taxon>Eukaryota</taxon>
        <taxon>Metazoa</taxon>
        <taxon>Ecdysozoa</taxon>
        <taxon>Arthropoda</taxon>
        <taxon>Chelicerata</taxon>
        <taxon>Arachnida</taxon>
        <taxon>Scorpiones</taxon>
        <taxon>Buthida</taxon>
        <taxon>Buthoidea</taxon>
        <taxon>Buthidae</taxon>
        <taxon>Centruroides</taxon>
    </lineage>
</organism>
<proteinExistence type="evidence at protein level"/>
<evidence type="ECO:0000250" key="1">
    <source>
        <dbReference type="UniProtKB" id="O46028"/>
    </source>
</evidence>
<evidence type="ECO:0000250" key="2">
    <source>
        <dbReference type="UniProtKB" id="P40755"/>
    </source>
</evidence>
<evidence type="ECO:0000269" key="3">
    <source>
    </source>
</evidence>
<evidence type="ECO:0000303" key="4">
    <source>
    </source>
</evidence>
<evidence type="ECO:0000305" key="5"/>
<evidence type="ECO:0000305" key="6">
    <source>
    </source>
</evidence>
<dbReference type="SMR" id="C0HM76"/>
<dbReference type="GO" id="GO:0005576">
    <property type="term" value="C:extracellular region"/>
    <property type="evidence" value="ECO:0007669"/>
    <property type="project" value="UniProtKB-SubCell"/>
</dbReference>
<dbReference type="GO" id="GO:0008200">
    <property type="term" value="F:ion channel inhibitor activity"/>
    <property type="evidence" value="ECO:0007669"/>
    <property type="project" value="InterPro"/>
</dbReference>
<dbReference type="GO" id="GO:0015459">
    <property type="term" value="F:potassium channel regulator activity"/>
    <property type="evidence" value="ECO:0007669"/>
    <property type="project" value="UniProtKB-KW"/>
</dbReference>
<dbReference type="GO" id="GO:0090729">
    <property type="term" value="F:toxin activity"/>
    <property type="evidence" value="ECO:0007669"/>
    <property type="project" value="UniProtKB-KW"/>
</dbReference>
<dbReference type="FunFam" id="3.30.30.10:FF:000009">
    <property type="entry name" value="Potassium channel toxin alpha-KTx 4.3"/>
    <property type="match status" value="1"/>
</dbReference>
<dbReference type="Gene3D" id="3.30.30.10">
    <property type="entry name" value="Knottin, scorpion toxin-like"/>
    <property type="match status" value="1"/>
</dbReference>
<dbReference type="InterPro" id="IPR036574">
    <property type="entry name" value="Scorpion_toxin-like_sf"/>
</dbReference>
<dbReference type="InterPro" id="IPR001947">
    <property type="entry name" value="Scorpion_toxinS_K_inh"/>
</dbReference>
<dbReference type="Pfam" id="PF00451">
    <property type="entry name" value="Toxin_2"/>
    <property type="match status" value="1"/>
</dbReference>
<dbReference type="PRINTS" id="PR00286">
    <property type="entry name" value="CHARYBDTOXIN"/>
</dbReference>
<dbReference type="SUPFAM" id="SSF57095">
    <property type="entry name" value="Scorpion toxin-like"/>
    <property type="match status" value="1"/>
</dbReference>
<accession>C0HM76</accession>